<gene>
    <name type="ordered locus">CC_0261</name>
</gene>
<organism>
    <name type="scientific">Caulobacter vibrioides (strain ATCC 19089 / CIP 103742 / CB 15)</name>
    <name type="common">Caulobacter crescentus</name>
    <dbReference type="NCBI Taxonomy" id="190650"/>
    <lineage>
        <taxon>Bacteria</taxon>
        <taxon>Pseudomonadati</taxon>
        <taxon>Pseudomonadota</taxon>
        <taxon>Alphaproteobacteria</taxon>
        <taxon>Caulobacterales</taxon>
        <taxon>Caulobacteraceae</taxon>
        <taxon>Caulobacter</taxon>
    </lineage>
</organism>
<feature type="chain" id="PRO_0000157312" description="2-dehydropantoate 2-reductase">
    <location>
        <begin position="1"/>
        <end position="290"/>
    </location>
</feature>
<feature type="active site" description="Proton donor" evidence="1">
    <location>
        <position position="175"/>
    </location>
</feature>
<feature type="binding site" evidence="1">
    <location>
        <begin position="8"/>
        <end position="13"/>
    </location>
    <ligand>
        <name>NADP(+)</name>
        <dbReference type="ChEBI" id="CHEBI:58349"/>
    </ligand>
</feature>
<feature type="binding site" evidence="1">
    <location>
        <position position="98"/>
    </location>
    <ligand>
        <name>NADP(+)</name>
        <dbReference type="ChEBI" id="CHEBI:58349"/>
    </ligand>
</feature>
<feature type="binding site" evidence="1">
    <location>
        <position position="98"/>
    </location>
    <ligand>
        <name>substrate</name>
    </ligand>
</feature>
<feature type="binding site" evidence="1">
    <location>
        <position position="124"/>
    </location>
    <ligand>
        <name>NADP(+)</name>
        <dbReference type="ChEBI" id="CHEBI:58349"/>
    </ligand>
</feature>
<feature type="binding site" evidence="1">
    <location>
        <position position="179"/>
    </location>
    <ligand>
        <name>substrate</name>
    </ligand>
</feature>
<feature type="binding site" evidence="1">
    <location>
        <position position="244"/>
    </location>
    <ligand>
        <name>substrate</name>
    </ligand>
</feature>
<feature type="binding site" evidence="1">
    <location>
        <position position="256"/>
    </location>
    <ligand>
        <name>NADP(+)</name>
        <dbReference type="ChEBI" id="CHEBI:58349"/>
    </ligand>
</feature>
<comment type="function">
    <text evidence="1">Catalyzes the NADPH-dependent reduction of ketopantoate into pantoic acid.</text>
</comment>
<comment type="catalytic activity">
    <reaction evidence="1">
        <text>(R)-pantoate + NADP(+) = 2-dehydropantoate + NADPH + H(+)</text>
        <dbReference type="Rhea" id="RHEA:16233"/>
        <dbReference type="ChEBI" id="CHEBI:11561"/>
        <dbReference type="ChEBI" id="CHEBI:15378"/>
        <dbReference type="ChEBI" id="CHEBI:15980"/>
        <dbReference type="ChEBI" id="CHEBI:57783"/>
        <dbReference type="ChEBI" id="CHEBI:58349"/>
        <dbReference type="EC" id="1.1.1.169"/>
    </reaction>
</comment>
<comment type="pathway">
    <text evidence="1">Cofactor biosynthesis; (R)-pantothenate biosynthesis; (R)-pantoate from 3-methyl-2-oxobutanoate: step 2/2.</text>
</comment>
<comment type="subcellular location">
    <subcellularLocation>
        <location evidence="1">Cytoplasm</location>
    </subcellularLocation>
</comment>
<comment type="similarity">
    <text evidence="2">Belongs to the ketopantoate reductase family.</text>
</comment>
<keyword id="KW-0963">Cytoplasm</keyword>
<keyword id="KW-0521">NADP</keyword>
<keyword id="KW-0560">Oxidoreductase</keyword>
<keyword id="KW-0566">Pantothenate biosynthesis</keyword>
<keyword id="KW-1185">Reference proteome</keyword>
<dbReference type="EC" id="1.1.1.169" evidence="1"/>
<dbReference type="EMBL" id="AE005673">
    <property type="protein sequence ID" value="AAK22248.1"/>
    <property type="molecule type" value="Genomic_DNA"/>
</dbReference>
<dbReference type="PIR" id="D87281">
    <property type="entry name" value="D87281"/>
</dbReference>
<dbReference type="RefSeq" id="NP_419080.1">
    <property type="nucleotide sequence ID" value="NC_002696.2"/>
</dbReference>
<dbReference type="RefSeq" id="WP_010918150.1">
    <property type="nucleotide sequence ID" value="NC_002696.2"/>
</dbReference>
<dbReference type="SMR" id="Q9ABG6"/>
<dbReference type="STRING" id="190650.CC_0261"/>
<dbReference type="EnsemblBacteria" id="AAK22248">
    <property type="protein sequence ID" value="AAK22248"/>
    <property type="gene ID" value="CC_0261"/>
</dbReference>
<dbReference type="KEGG" id="ccr:CC_0261"/>
<dbReference type="PATRIC" id="fig|190650.5.peg.256"/>
<dbReference type="eggNOG" id="COG1893">
    <property type="taxonomic scope" value="Bacteria"/>
</dbReference>
<dbReference type="HOGENOM" id="CLU_031468_4_0_5"/>
<dbReference type="BioCyc" id="CAULO:CC0261-MONOMER"/>
<dbReference type="UniPathway" id="UPA00028">
    <property type="reaction ID" value="UER00004"/>
</dbReference>
<dbReference type="Proteomes" id="UP000001816">
    <property type="component" value="Chromosome"/>
</dbReference>
<dbReference type="GO" id="GO:0005737">
    <property type="term" value="C:cytoplasm"/>
    <property type="evidence" value="ECO:0007669"/>
    <property type="project" value="UniProtKB-SubCell"/>
</dbReference>
<dbReference type="GO" id="GO:0008677">
    <property type="term" value="F:2-dehydropantoate 2-reductase activity"/>
    <property type="evidence" value="ECO:0007669"/>
    <property type="project" value="UniProtKB-EC"/>
</dbReference>
<dbReference type="GO" id="GO:0050661">
    <property type="term" value="F:NADP binding"/>
    <property type="evidence" value="ECO:0007669"/>
    <property type="project" value="TreeGrafter"/>
</dbReference>
<dbReference type="GO" id="GO:0015940">
    <property type="term" value="P:pantothenate biosynthetic process"/>
    <property type="evidence" value="ECO:0007669"/>
    <property type="project" value="UniProtKB-UniPathway"/>
</dbReference>
<dbReference type="Gene3D" id="1.10.1040.10">
    <property type="entry name" value="N-(1-d-carboxylethyl)-l-norvaline Dehydrogenase, domain 2"/>
    <property type="match status" value="1"/>
</dbReference>
<dbReference type="Gene3D" id="3.40.50.720">
    <property type="entry name" value="NAD(P)-binding Rossmann-like Domain"/>
    <property type="match status" value="1"/>
</dbReference>
<dbReference type="InterPro" id="IPR008927">
    <property type="entry name" value="6-PGluconate_DH-like_C_sf"/>
</dbReference>
<dbReference type="InterPro" id="IPR013328">
    <property type="entry name" value="6PGD_dom2"/>
</dbReference>
<dbReference type="InterPro" id="IPR003710">
    <property type="entry name" value="ApbA"/>
</dbReference>
<dbReference type="InterPro" id="IPR050838">
    <property type="entry name" value="Ketopantoate_reductase"/>
</dbReference>
<dbReference type="InterPro" id="IPR013752">
    <property type="entry name" value="KPA_reductase"/>
</dbReference>
<dbReference type="InterPro" id="IPR013332">
    <property type="entry name" value="KPR_N"/>
</dbReference>
<dbReference type="InterPro" id="IPR036291">
    <property type="entry name" value="NAD(P)-bd_dom_sf"/>
</dbReference>
<dbReference type="NCBIfam" id="TIGR00745">
    <property type="entry name" value="apbA_panE"/>
    <property type="match status" value="1"/>
</dbReference>
<dbReference type="NCBIfam" id="NF005091">
    <property type="entry name" value="PRK06522.2-2"/>
    <property type="match status" value="1"/>
</dbReference>
<dbReference type="PANTHER" id="PTHR43765:SF2">
    <property type="entry name" value="2-DEHYDROPANTOATE 2-REDUCTASE"/>
    <property type="match status" value="1"/>
</dbReference>
<dbReference type="PANTHER" id="PTHR43765">
    <property type="entry name" value="2-DEHYDROPANTOATE 2-REDUCTASE-RELATED"/>
    <property type="match status" value="1"/>
</dbReference>
<dbReference type="Pfam" id="PF02558">
    <property type="entry name" value="ApbA"/>
    <property type="match status" value="1"/>
</dbReference>
<dbReference type="Pfam" id="PF08546">
    <property type="entry name" value="ApbA_C"/>
    <property type="match status" value="1"/>
</dbReference>
<dbReference type="SUPFAM" id="SSF48179">
    <property type="entry name" value="6-phosphogluconate dehydrogenase C-terminal domain-like"/>
    <property type="match status" value="1"/>
</dbReference>
<dbReference type="SUPFAM" id="SSF51735">
    <property type="entry name" value="NAD(P)-binding Rossmann-fold domains"/>
    <property type="match status" value="1"/>
</dbReference>
<sequence length="290" mass="30189">MTSIAVIGPGAVGGTLAAWLAQKPDHVVTVCVRTPFEALAVETPEGAISATPRVATSPESLAPVDWVLVTTKTYDTDATWTWLDALVGPQTRVAILRNGVEHVAPFVGKIAAERLVPAVVDIPAERSAPGRMLQRRNGWIKVPVGPAGEAFAALFAHTPIELHVVEDFVTEAWKKLALNCAGAVNALVLKPAGIAHDEGAAQVMRSLVRECVAVGRAEGADLSDDLPDQVIAGYRAADPGSVNSLHADRAAGRAMELDARNGVIVRRGAAHGIATPANAMVVALLNAAAL</sequence>
<accession>Q9ABG6</accession>
<reference key="1">
    <citation type="journal article" date="2001" name="Proc. Natl. Acad. Sci. U.S.A.">
        <title>Complete genome sequence of Caulobacter crescentus.</title>
        <authorList>
            <person name="Nierman W.C."/>
            <person name="Feldblyum T.V."/>
            <person name="Laub M.T."/>
            <person name="Paulsen I.T."/>
            <person name="Nelson K.E."/>
            <person name="Eisen J.A."/>
            <person name="Heidelberg J.F."/>
            <person name="Alley M.R.K."/>
            <person name="Ohta N."/>
            <person name="Maddock J.R."/>
            <person name="Potocka I."/>
            <person name="Nelson W.C."/>
            <person name="Newton A."/>
            <person name="Stephens C."/>
            <person name="Phadke N.D."/>
            <person name="Ely B."/>
            <person name="DeBoy R.T."/>
            <person name="Dodson R.J."/>
            <person name="Durkin A.S."/>
            <person name="Gwinn M.L."/>
            <person name="Haft D.H."/>
            <person name="Kolonay J.F."/>
            <person name="Smit J."/>
            <person name="Craven M.B."/>
            <person name="Khouri H.M."/>
            <person name="Shetty J."/>
            <person name="Berry K.J."/>
            <person name="Utterback T.R."/>
            <person name="Tran K."/>
            <person name="Wolf A.M."/>
            <person name="Vamathevan J.J."/>
            <person name="Ermolaeva M.D."/>
            <person name="White O."/>
            <person name="Salzberg S.L."/>
            <person name="Venter J.C."/>
            <person name="Shapiro L."/>
            <person name="Fraser C.M."/>
        </authorList>
    </citation>
    <scope>NUCLEOTIDE SEQUENCE [LARGE SCALE GENOMIC DNA]</scope>
    <source>
        <strain>ATCC 19089 / CIP 103742 / CB 15</strain>
    </source>
</reference>
<proteinExistence type="inferred from homology"/>
<evidence type="ECO:0000250" key="1">
    <source>
        <dbReference type="UniProtKB" id="P0A9J4"/>
    </source>
</evidence>
<evidence type="ECO:0000305" key="2"/>
<protein>
    <recommendedName>
        <fullName evidence="1">2-dehydropantoate 2-reductase</fullName>
        <ecNumber evidence="1">1.1.1.169</ecNumber>
    </recommendedName>
    <alternativeName>
        <fullName evidence="1">Ketopantoate reductase</fullName>
        <shortName evidence="1">KPR</shortName>
    </alternativeName>
</protein>
<name>PANE_CAUVC</name>